<proteinExistence type="evidence at transcript level"/>
<accession>O04515</accession>
<organism>
    <name type="scientific">Arabidopsis thaliana</name>
    <name type="common">Mouse-ear cress</name>
    <dbReference type="NCBI Taxonomy" id="3702"/>
    <lineage>
        <taxon>Eukaryota</taxon>
        <taxon>Viridiplantae</taxon>
        <taxon>Streptophyta</taxon>
        <taxon>Embryophyta</taxon>
        <taxon>Tracheophyta</taxon>
        <taxon>Spermatophyta</taxon>
        <taxon>Magnoliopsida</taxon>
        <taxon>eudicotyledons</taxon>
        <taxon>Gunneridae</taxon>
        <taxon>Pentapetalae</taxon>
        <taxon>rosids</taxon>
        <taxon>malvids</taxon>
        <taxon>Brassicales</taxon>
        <taxon>Brassicaceae</taxon>
        <taxon>Camelineae</taxon>
        <taxon>Arabidopsis</taxon>
    </lineage>
</organism>
<gene>
    <name evidence="4" type="primary">RAS1</name>
    <name evidence="5" type="ordered locus">At1g09950</name>
    <name evidence="6" type="ORF">F21M12.34</name>
</gene>
<comment type="function">
    <text evidence="2">Negative regulator of salt (NaCl) tolerance probably by enhancing abscisic acid (ABA) sensitivity.</text>
</comment>
<comment type="induction">
    <text evidence="2 3">Induced by abscisic acid (ABA) and salt stress (NaCl) (PubMed:20212128). Up-regulated by ZAT18 upon drought (PubMed:28586434).</text>
</comment>
<comment type="disruption phenotype">
    <text evidence="2">Decreased salt and abscisic acid (ABA) sensitivity.</text>
</comment>
<comment type="miscellaneous">
    <text evidence="2">Loss of function contributes to the increased salt (NaCl) tolerance of cv. Sha.</text>
</comment>
<name>RAS1_ARATH</name>
<feature type="chain" id="PRO_0000448578" description="Protein RESPONSE TO ABA AND SALT 1">
    <location>
        <begin position="1"/>
        <end position="230"/>
    </location>
</feature>
<feature type="domain" description="DOG1" evidence="1">
    <location>
        <begin position="7"/>
        <end position="230"/>
    </location>
</feature>
<feature type="sequence variant" description="In strain: cv. Sha." evidence="2">
    <original>K</original>
    <variation>R</variation>
    <location>
        <position position="130"/>
    </location>
</feature>
<feature type="sequence variant" description="In strain: cv. Sha; contributes to an increased salt (NaCl) tolerance." evidence="2">
    <location>
        <begin position="210"/>
        <end position="230"/>
    </location>
</feature>
<reference key="1">
    <citation type="journal article" date="2000" name="Nature">
        <title>Sequence and analysis of chromosome 1 of the plant Arabidopsis thaliana.</title>
        <authorList>
            <person name="Theologis A."/>
            <person name="Ecker J.R."/>
            <person name="Palm C.J."/>
            <person name="Federspiel N.A."/>
            <person name="Kaul S."/>
            <person name="White O."/>
            <person name="Alonso J."/>
            <person name="Altafi H."/>
            <person name="Araujo R."/>
            <person name="Bowman C.L."/>
            <person name="Brooks S.Y."/>
            <person name="Buehler E."/>
            <person name="Chan A."/>
            <person name="Chao Q."/>
            <person name="Chen H."/>
            <person name="Cheuk R.F."/>
            <person name="Chin C.W."/>
            <person name="Chung M.K."/>
            <person name="Conn L."/>
            <person name="Conway A.B."/>
            <person name="Conway A.R."/>
            <person name="Creasy T.H."/>
            <person name="Dewar K."/>
            <person name="Dunn P."/>
            <person name="Etgu P."/>
            <person name="Feldblyum T.V."/>
            <person name="Feng J.-D."/>
            <person name="Fong B."/>
            <person name="Fujii C.Y."/>
            <person name="Gill J.E."/>
            <person name="Goldsmith A.D."/>
            <person name="Haas B."/>
            <person name="Hansen N.F."/>
            <person name="Hughes B."/>
            <person name="Huizar L."/>
            <person name="Hunter J.L."/>
            <person name="Jenkins J."/>
            <person name="Johnson-Hopson C."/>
            <person name="Khan S."/>
            <person name="Khaykin E."/>
            <person name="Kim C.J."/>
            <person name="Koo H.L."/>
            <person name="Kremenetskaia I."/>
            <person name="Kurtz D.B."/>
            <person name="Kwan A."/>
            <person name="Lam B."/>
            <person name="Langin-Hooper S."/>
            <person name="Lee A."/>
            <person name="Lee J.M."/>
            <person name="Lenz C.A."/>
            <person name="Li J.H."/>
            <person name="Li Y.-P."/>
            <person name="Lin X."/>
            <person name="Liu S.X."/>
            <person name="Liu Z.A."/>
            <person name="Luros J.S."/>
            <person name="Maiti R."/>
            <person name="Marziali A."/>
            <person name="Militscher J."/>
            <person name="Miranda M."/>
            <person name="Nguyen M."/>
            <person name="Nierman W.C."/>
            <person name="Osborne B.I."/>
            <person name="Pai G."/>
            <person name="Peterson J."/>
            <person name="Pham P.K."/>
            <person name="Rizzo M."/>
            <person name="Rooney T."/>
            <person name="Rowley D."/>
            <person name="Sakano H."/>
            <person name="Salzberg S.L."/>
            <person name="Schwartz J.R."/>
            <person name="Shinn P."/>
            <person name="Southwick A.M."/>
            <person name="Sun H."/>
            <person name="Tallon L.J."/>
            <person name="Tambunga G."/>
            <person name="Toriumi M.J."/>
            <person name="Town C.D."/>
            <person name="Utterback T."/>
            <person name="Van Aken S."/>
            <person name="Vaysberg M."/>
            <person name="Vysotskaia V.S."/>
            <person name="Walker M."/>
            <person name="Wu D."/>
            <person name="Yu G."/>
            <person name="Fraser C.M."/>
            <person name="Venter J.C."/>
            <person name="Davis R.W."/>
        </authorList>
    </citation>
    <scope>NUCLEOTIDE SEQUENCE [LARGE SCALE GENOMIC DNA]</scope>
    <source>
        <strain>cv. Columbia</strain>
    </source>
</reference>
<reference key="2">
    <citation type="journal article" date="2017" name="Plant J.">
        <title>Araport11: a complete reannotation of the Arabidopsis thaliana reference genome.</title>
        <authorList>
            <person name="Cheng C.Y."/>
            <person name="Krishnakumar V."/>
            <person name="Chan A.P."/>
            <person name="Thibaud-Nissen F."/>
            <person name="Schobel S."/>
            <person name="Town C.D."/>
        </authorList>
    </citation>
    <scope>GENOME REANNOTATION</scope>
    <source>
        <strain>cv. Columbia</strain>
    </source>
</reference>
<reference key="3">
    <citation type="submission" date="2004-03" db="EMBL/GenBank/DDBJ databases">
        <title>Arabidopsis ORF clones.</title>
        <authorList>
            <person name="Cheuk R.F."/>
            <person name="Chen H."/>
            <person name="Kim C.J."/>
            <person name="Shinn P."/>
            <person name="Ecker J.R."/>
        </authorList>
    </citation>
    <scope>NUCLEOTIDE SEQUENCE [LARGE SCALE MRNA]</scope>
    <source>
        <strain>cv. Columbia</strain>
    </source>
</reference>
<reference key="4">
    <citation type="submission" date="2006-07" db="EMBL/GenBank/DDBJ databases">
        <title>Large-scale analysis of RIKEN Arabidopsis full-length (RAFL) cDNAs.</title>
        <authorList>
            <person name="Totoki Y."/>
            <person name="Seki M."/>
            <person name="Ishida J."/>
            <person name="Nakajima M."/>
            <person name="Enju A."/>
            <person name="Kamiya A."/>
            <person name="Narusaka M."/>
            <person name="Shin-i T."/>
            <person name="Nakagawa M."/>
            <person name="Sakamoto N."/>
            <person name="Oishi K."/>
            <person name="Kohara Y."/>
            <person name="Kobayashi M."/>
            <person name="Toyoda A."/>
            <person name="Sakaki Y."/>
            <person name="Sakurai T."/>
            <person name="Iida K."/>
            <person name="Akiyama K."/>
            <person name="Satou M."/>
            <person name="Toyoda T."/>
            <person name="Konagaya A."/>
            <person name="Carninci P."/>
            <person name="Kawai J."/>
            <person name="Hayashizaki Y."/>
            <person name="Shinozaki K."/>
        </authorList>
    </citation>
    <scope>NUCLEOTIDE SEQUENCE [LARGE SCALE MRNA]</scope>
    <source>
        <strain>cv. Columbia</strain>
    </source>
</reference>
<reference key="5">
    <citation type="journal article" date="2010" name="Proc. Natl. Acad. Sci. U.S.A.">
        <title>RAS1, a quantitative trait locus for salt tolerance and ABA sensitivity in Arabidopsis.</title>
        <authorList>
            <person name="Ren Z."/>
            <person name="Zheng Z."/>
            <person name="Chinnusamy V."/>
            <person name="Zhu J."/>
            <person name="Cui X."/>
            <person name="Iida K."/>
            <person name="Zhu J.-K."/>
        </authorList>
    </citation>
    <scope>FUNCTION</scope>
    <scope>DISRUPTION PHENOTYPE</scope>
    <scope>INDUCTION BY ABSCISIC ACID AND SALT STRESS</scope>
    <scope>VARIANTS ARG-130 AND 210-LYS--ALA-230 DEL</scope>
    <source>
        <strain>cv. Columbia</strain>
        <strain>cv. Landsberg erecta</strain>
        <strain>cv. Sha</strain>
    </source>
</reference>
<reference key="6">
    <citation type="journal article" date="2017" name="J. Exp. Bot.">
        <title>The Arabidopsis Cys2/His2 zinc finger transcription factor ZAT18 is a positive regulator of plant tolerance to drought stress.</title>
        <authorList>
            <person name="Yin M."/>
            <person name="Wang Y."/>
            <person name="Zhang L."/>
            <person name="Li J."/>
            <person name="Quan W."/>
            <person name="Yang L."/>
            <person name="Wang Q."/>
            <person name="Chan Z."/>
        </authorList>
    </citation>
    <scope>INDUCTION BY DROUGHT</scope>
</reference>
<sequence>MPNTSSSQSFTIFVDGWLIRHRYFVEQLMCASSLDETNRISLEEQQSLVAQFLSHCLQYYQEKFASVSLAGDNVFTFFCPPWFNSYAKLILWVGDFKPSLVFKLTEVSVADLTRHQKDRISSLKSETRRKEREVMRDFALVQQSVADPPVMLAARRVGAVGMVDGEETDLEEAMEVLKAGMAAAMNNADQLRCSTVGKVVEILTPPQAIKVLRTIGQLHLRLRDRDQERA</sequence>
<keyword id="KW-0938">Abscisic acid signaling pathway</keyword>
<keyword id="KW-0010">Activator</keyword>
<keyword id="KW-1185">Reference proteome</keyword>
<keyword id="KW-0346">Stress response</keyword>
<keyword id="KW-0804">Transcription</keyword>
<keyword id="KW-0805">Transcription regulation</keyword>
<protein>
    <recommendedName>
        <fullName evidence="4">Protein RESPONSE TO ABA AND SALT 1</fullName>
    </recommendedName>
</protein>
<dbReference type="EMBL" id="AC000132">
    <property type="protein sequence ID" value="AAB60750.1"/>
    <property type="molecule type" value="Genomic_DNA"/>
</dbReference>
<dbReference type="EMBL" id="CP002684">
    <property type="protein sequence ID" value="AEE28520.1"/>
    <property type="molecule type" value="Genomic_DNA"/>
</dbReference>
<dbReference type="EMBL" id="BT012212">
    <property type="protein sequence ID" value="AAS76699.1"/>
    <property type="molecule type" value="mRNA"/>
</dbReference>
<dbReference type="EMBL" id="BT012400">
    <property type="protein sequence ID" value="AAS92316.1"/>
    <property type="molecule type" value="mRNA"/>
</dbReference>
<dbReference type="EMBL" id="AK228972">
    <property type="protein sequence ID" value="BAF00861.1"/>
    <property type="molecule type" value="mRNA"/>
</dbReference>
<dbReference type="PIR" id="H86233">
    <property type="entry name" value="H86233"/>
</dbReference>
<dbReference type="RefSeq" id="NP_172466.1">
    <property type="nucleotide sequence ID" value="NM_100869.4"/>
</dbReference>
<dbReference type="SMR" id="O04515"/>
<dbReference type="STRING" id="3702.O04515"/>
<dbReference type="PaxDb" id="3702-AT1G09950.1"/>
<dbReference type="EnsemblPlants" id="AT1G09950.1">
    <property type="protein sequence ID" value="AT1G09950.1"/>
    <property type="gene ID" value="AT1G09950"/>
</dbReference>
<dbReference type="GeneID" id="837529"/>
<dbReference type="Gramene" id="AT1G09950.1">
    <property type="protein sequence ID" value="AT1G09950.1"/>
    <property type="gene ID" value="AT1G09950"/>
</dbReference>
<dbReference type="KEGG" id="ath:AT1G09950"/>
<dbReference type="Araport" id="AT1G09950"/>
<dbReference type="TAIR" id="AT1G09950">
    <property type="gene designation" value="RAS1"/>
</dbReference>
<dbReference type="eggNOG" id="ENOG502RZPJ">
    <property type="taxonomic scope" value="Eukaryota"/>
</dbReference>
<dbReference type="HOGENOM" id="CLU_024782_2_0_1"/>
<dbReference type="InParanoid" id="O04515"/>
<dbReference type="OMA" id="CPPWFTS"/>
<dbReference type="PhylomeDB" id="O04515"/>
<dbReference type="PRO" id="PR:O04515"/>
<dbReference type="Proteomes" id="UP000006548">
    <property type="component" value="Chromosome 1"/>
</dbReference>
<dbReference type="ExpressionAtlas" id="O04515">
    <property type="expression patterns" value="baseline and differential"/>
</dbReference>
<dbReference type="GO" id="GO:0043565">
    <property type="term" value="F:sequence-specific DNA binding"/>
    <property type="evidence" value="ECO:0007669"/>
    <property type="project" value="InterPro"/>
</dbReference>
<dbReference type="GO" id="GO:0009738">
    <property type="term" value="P:abscisic acid-activated signaling pathway"/>
    <property type="evidence" value="ECO:0007669"/>
    <property type="project" value="UniProtKB-KW"/>
</dbReference>
<dbReference type="GO" id="GO:0006351">
    <property type="term" value="P:DNA-templated transcription"/>
    <property type="evidence" value="ECO:0007669"/>
    <property type="project" value="InterPro"/>
</dbReference>
<dbReference type="GO" id="GO:0009788">
    <property type="term" value="P:negative regulation of abscisic acid-activated signaling pathway"/>
    <property type="evidence" value="ECO:0000315"/>
    <property type="project" value="UniProtKB"/>
</dbReference>
<dbReference type="GO" id="GO:1900070">
    <property type="term" value="P:negative regulation of cellular hyperosmotic salinity response"/>
    <property type="evidence" value="ECO:0000315"/>
    <property type="project" value="UniProtKB"/>
</dbReference>
<dbReference type="GO" id="GO:0009737">
    <property type="term" value="P:response to abscisic acid"/>
    <property type="evidence" value="ECO:0000270"/>
    <property type="project" value="UniProtKB"/>
</dbReference>
<dbReference type="GO" id="GO:0009651">
    <property type="term" value="P:response to salt stress"/>
    <property type="evidence" value="ECO:0000270"/>
    <property type="project" value="UniProtKB"/>
</dbReference>
<dbReference type="InterPro" id="IPR051886">
    <property type="entry name" value="Seed_Dev/Stress_Resp_Reg"/>
</dbReference>
<dbReference type="InterPro" id="IPR025422">
    <property type="entry name" value="TGA_domain"/>
</dbReference>
<dbReference type="PANTHER" id="PTHR46354">
    <property type="entry name" value="DOG1 DOMAIN-CONTAINING PROTEIN"/>
    <property type="match status" value="1"/>
</dbReference>
<dbReference type="PANTHER" id="PTHR46354:SF1">
    <property type="entry name" value="PROTEIN RESPONSE TO ABA AND SALT 1-RELATED"/>
    <property type="match status" value="1"/>
</dbReference>
<dbReference type="Pfam" id="PF14144">
    <property type="entry name" value="DOG1"/>
    <property type="match status" value="1"/>
</dbReference>
<dbReference type="PROSITE" id="PS51806">
    <property type="entry name" value="DOG1"/>
    <property type="match status" value="1"/>
</dbReference>
<evidence type="ECO:0000255" key="1">
    <source>
        <dbReference type="PROSITE-ProRule" id="PRU01147"/>
    </source>
</evidence>
<evidence type="ECO:0000269" key="2">
    <source>
    </source>
</evidence>
<evidence type="ECO:0000269" key="3">
    <source>
    </source>
</evidence>
<evidence type="ECO:0000303" key="4">
    <source>
    </source>
</evidence>
<evidence type="ECO:0000312" key="5">
    <source>
        <dbReference type="Araport" id="AT1G09950"/>
    </source>
</evidence>
<evidence type="ECO:0000312" key="6">
    <source>
        <dbReference type="EMBL" id="AAB60750.1"/>
    </source>
</evidence>